<organism>
    <name type="scientific">Ruegeria sp. (strain TM1040)</name>
    <name type="common">Silicibacter sp.</name>
    <dbReference type="NCBI Taxonomy" id="292414"/>
    <lineage>
        <taxon>Bacteria</taxon>
        <taxon>Pseudomonadati</taxon>
        <taxon>Pseudomonadota</taxon>
        <taxon>Alphaproteobacteria</taxon>
        <taxon>Rhodobacterales</taxon>
        <taxon>Roseobacteraceae</taxon>
        <taxon>Ruegeria</taxon>
    </lineage>
</organism>
<evidence type="ECO:0000255" key="1">
    <source>
        <dbReference type="HAMAP-Rule" id="MF_00503"/>
    </source>
</evidence>
<evidence type="ECO:0000256" key="2">
    <source>
        <dbReference type="SAM" id="MobiDB-lite"/>
    </source>
</evidence>
<evidence type="ECO:0000305" key="3"/>
<proteinExistence type="inferred from homology"/>
<protein>
    <recommendedName>
        <fullName evidence="1">Large ribosomal subunit protein bL9</fullName>
    </recommendedName>
    <alternativeName>
        <fullName evidence="3">50S ribosomal protein L9</fullName>
    </alternativeName>
</protein>
<keyword id="KW-1185">Reference proteome</keyword>
<keyword id="KW-0687">Ribonucleoprotein</keyword>
<keyword id="KW-0689">Ribosomal protein</keyword>
<keyword id="KW-0694">RNA-binding</keyword>
<keyword id="KW-0699">rRNA-binding</keyword>
<name>RL9_RUEST</name>
<feature type="chain" id="PRO_0000258489" description="Large ribosomal subunit protein bL9">
    <location>
        <begin position="1"/>
        <end position="204"/>
    </location>
</feature>
<feature type="region of interest" description="Disordered" evidence="2">
    <location>
        <begin position="180"/>
        <end position="204"/>
    </location>
</feature>
<feature type="compositionally biased region" description="Acidic residues" evidence="2">
    <location>
        <begin position="187"/>
        <end position="204"/>
    </location>
</feature>
<accession>Q1GHU0</accession>
<dbReference type="EMBL" id="CP000377">
    <property type="protein sequence ID" value="ABF63776.1"/>
    <property type="molecule type" value="Genomic_DNA"/>
</dbReference>
<dbReference type="RefSeq" id="WP_011538386.1">
    <property type="nucleotide sequence ID" value="NC_008044.1"/>
</dbReference>
<dbReference type="SMR" id="Q1GHU0"/>
<dbReference type="STRING" id="292414.TM1040_1043"/>
<dbReference type="KEGG" id="sit:TM1040_1043"/>
<dbReference type="eggNOG" id="COG0359">
    <property type="taxonomic scope" value="Bacteria"/>
</dbReference>
<dbReference type="HOGENOM" id="CLU_078938_1_0_5"/>
<dbReference type="OrthoDB" id="9788336at2"/>
<dbReference type="Proteomes" id="UP000000636">
    <property type="component" value="Chromosome"/>
</dbReference>
<dbReference type="GO" id="GO:1990904">
    <property type="term" value="C:ribonucleoprotein complex"/>
    <property type="evidence" value="ECO:0007669"/>
    <property type="project" value="UniProtKB-KW"/>
</dbReference>
<dbReference type="GO" id="GO:0005840">
    <property type="term" value="C:ribosome"/>
    <property type="evidence" value="ECO:0007669"/>
    <property type="project" value="UniProtKB-KW"/>
</dbReference>
<dbReference type="GO" id="GO:0019843">
    <property type="term" value="F:rRNA binding"/>
    <property type="evidence" value="ECO:0007669"/>
    <property type="project" value="UniProtKB-UniRule"/>
</dbReference>
<dbReference type="GO" id="GO:0003735">
    <property type="term" value="F:structural constituent of ribosome"/>
    <property type="evidence" value="ECO:0007669"/>
    <property type="project" value="InterPro"/>
</dbReference>
<dbReference type="GO" id="GO:0006412">
    <property type="term" value="P:translation"/>
    <property type="evidence" value="ECO:0007669"/>
    <property type="project" value="UniProtKB-UniRule"/>
</dbReference>
<dbReference type="Gene3D" id="3.10.430.100">
    <property type="entry name" value="Ribosomal protein L9, C-terminal domain"/>
    <property type="match status" value="1"/>
</dbReference>
<dbReference type="Gene3D" id="3.40.5.10">
    <property type="entry name" value="Ribosomal protein L9, N-terminal domain"/>
    <property type="match status" value="1"/>
</dbReference>
<dbReference type="HAMAP" id="MF_00503">
    <property type="entry name" value="Ribosomal_bL9"/>
    <property type="match status" value="1"/>
</dbReference>
<dbReference type="InterPro" id="IPR000244">
    <property type="entry name" value="Ribosomal_bL9"/>
</dbReference>
<dbReference type="InterPro" id="IPR009027">
    <property type="entry name" value="Ribosomal_bL9/RNase_H1_N"/>
</dbReference>
<dbReference type="InterPro" id="IPR020594">
    <property type="entry name" value="Ribosomal_bL9_bac/chp"/>
</dbReference>
<dbReference type="InterPro" id="IPR020069">
    <property type="entry name" value="Ribosomal_bL9_C"/>
</dbReference>
<dbReference type="InterPro" id="IPR036791">
    <property type="entry name" value="Ribosomal_bL9_C_sf"/>
</dbReference>
<dbReference type="InterPro" id="IPR020070">
    <property type="entry name" value="Ribosomal_bL9_N"/>
</dbReference>
<dbReference type="InterPro" id="IPR036935">
    <property type="entry name" value="Ribosomal_bL9_N_sf"/>
</dbReference>
<dbReference type="NCBIfam" id="TIGR00158">
    <property type="entry name" value="L9"/>
    <property type="match status" value="1"/>
</dbReference>
<dbReference type="PANTHER" id="PTHR21368">
    <property type="entry name" value="50S RIBOSOMAL PROTEIN L9"/>
    <property type="match status" value="1"/>
</dbReference>
<dbReference type="Pfam" id="PF03948">
    <property type="entry name" value="Ribosomal_L9_C"/>
    <property type="match status" value="1"/>
</dbReference>
<dbReference type="Pfam" id="PF01281">
    <property type="entry name" value="Ribosomal_L9_N"/>
    <property type="match status" value="1"/>
</dbReference>
<dbReference type="SUPFAM" id="SSF55658">
    <property type="entry name" value="L9 N-domain-like"/>
    <property type="match status" value="1"/>
</dbReference>
<dbReference type="SUPFAM" id="SSF55653">
    <property type="entry name" value="Ribosomal protein L9 C-domain"/>
    <property type="match status" value="1"/>
</dbReference>
<dbReference type="PROSITE" id="PS00651">
    <property type="entry name" value="RIBOSOMAL_L9"/>
    <property type="match status" value="1"/>
</dbReference>
<comment type="function">
    <text evidence="1">Binds to the 23S rRNA.</text>
</comment>
<comment type="similarity">
    <text evidence="1">Belongs to the bacterial ribosomal protein bL9 family.</text>
</comment>
<reference key="1">
    <citation type="submission" date="2006-05" db="EMBL/GenBank/DDBJ databases">
        <title>Complete sequence of chromosome of Silicibacter sp. TM1040.</title>
        <authorList>
            <consortium name="US DOE Joint Genome Institute"/>
            <person name="Copeland A."/>
            <person name="Lucas S."/>
            <person name="Lapidus A."/>
            <person name="Barry K."/>
            <person name="Detter J.C."/>
            <person name="Glavina del Rio T."/>
            <person name="Hammon N."/>
            <person name="Israni S."/>
            <person name="Dalin E."/>
            <person name="Tice H."/>
            <person name="Pitluck S."/>
            <person name="Brettin T."/>
            <person name="Bruce D."/>
            <person name="Han C."/>
            <person name="Tapia R."/>
            <person name="Goodwin L."/>
            <person name="Thompson L.S."/>
            <person name="Gilna P."/>
            <person name="Schmutz J."/>
            <person name="Larimer F."/>
            <person name="Land M."/>
            <person name="Hauser L."/>
            <person name="Kyrpides N."/>
            <person name="Kim E."/>
            <person name="Belas R."/>
            <person name="Moran M.A."/>
            <person name="Buchan A."/>
            <person name="Gonzalez J.M."/>
            <person name="Schell M.A."/>
            <person name="Sun F."/>
            <person name="Richardson P."/>
        </authorList>
    </citation>
    <scope>NUCLEOTIDE SEQUENCE [LARGE SCALE GENOMIC DNA]</scope>
    <source>
        <strain>TM1040</strain>
    </source>
</reference>
<sequence length="204" mass="21745">MQVILLERVAKLGQMGDVVDVKPGFARNYLLPQGKAQTASDANIAAFEAQKAQLEARNLETKKEAEALGEKLGGQQFVVIRSASDGGNLYGSVTTRDAADVATEEGFSVDRKQVIIREPIKTLGLHIAEVHLHPEVMVTIELNVARSPEEAELQASGKSIQELAAEEEAAAEFEISELFDDIGGAASDDEGDAPAAAADEEESK</sequence>
<gene>
    <name evidence="1" type="primary">rplI</name>
    <name type="ordered locus">TM1040_1043</name>
</gene>